<keyword id="KW-0238">DNA-binding</keyword>
<keyword id="KW-1017">Isopeptide bond</keyword>
<keyword id="KW-0479">Metal-binding</keyword>
<keyword id="KW-0539">Nucleus</keyword>
<keyword id="KW-1267">Proteomics identification</keyword>
<keyword id="KW-1185">Reference proteome</keyword>
<keyword id="KW-0677">Repeat</keyword>
<keyword id="KW-0804">Transcription</keyword>
<keyword id="KW-0805">Transcription regulation</keyword>
<keyword id="KW-0832">Ubl conjugation</keyword>
<keyword id="KW-0862">Zinc</keyword>
<keyword id="KW-0863">Zinc-finger</keyword>
<sequence>MEGFMDSGTQTDAVVVLSLAQAAVLGLVSENELFGATISAEAFYPDLGPELSGAAMGEPEPPGPDVYQLACNGRALEEPAEEEVLEVEAACEKHTRRKTRPPVRLVPKVKFEKVEEEEQEVYEVSVPGDDKDAGPAEAPAEAASGGCDALVQSSAVKMIDLSAFSRKPRTLRHLPRTPRPELNVAPYDPHFPAPARDGFPEPSMALPGPEALPTECGFEPPHLAPLSDPEAPSMESPEPVKPEQGFVWQEASEFEADTAGSTVERHKKAQLDRLDINVQIDDSYLVEAGDRQKRWQCRMCEKSYTSKYNLVTHILGHNGIKPHSCPHCSKLFKQPSHLQTHLLTHQGTRPHKCQVCHKAFTQTSHLKRHMLLHSEVKPYSCHFCGRGFAYPSELKAHEVKHESGRCHVCVECGLDFSTLTQLKRHLASHQGPTLYQCLECDKSFHYRSQLQNHMLKHQNVRPFVCTECGMEFSQIHHLKQHSLTHKGVKEFKCEVCGREFTLQANMKRHMLIHTSVRPYQCHICFKTFVQKQTLKTHMIVHSPVKPFKCKVCGKSFNRMYNLLGHMHLHAGSKPFKCPYCSSKFNLKGNLSRHMKVKHGVMDIGLDSQDPMMELTGTDPSELDGQQEMEDFEENAYSYASVDSSAEASVLTEQAMKEMAYYNVL</sequence>
<protein>
    <recommendedName>
        <fullName>Zinc finger protein 710</fullName>
    </recommendedName>
</protein>
<organism>
    <name type="scientific">Homo sapiens</name>
    <name type="common">Human</name>
    <dbReference type="NCBI Taxonomy" id="9606"/>
    <lineage>
        <taxon>Eukaryota</taxon>
        <taxon>Metazoa</taxon>
        <taxon>Chordata</taxon>
        <taxon>Craniata</taxon>
        <taxon>Vertebrata</taxon>
        <taxon>Euteleostomi</taxon>
        <taxon>Mammalia</taxon>
        <taxon>Eutheria</taxon>
        <taxon>Euarchontoglires</taxon>
        <taxon>Primates</taxon>
        <taxon>Haplorrhini</taxon>
        <taxon>Catarrhini</taxon>
        <taxon>Hominidae</taxon>
        <taxon>Homo</taxon>
    </lineage>
</organism>
<comment type="function">
    <text>May be involved in transcriptional regulation.</text>
</comment>
<comment type="interaction">
    <interactant intactId="EBI-18096911">
        <id>Q8N1W2</id>
    </interactant>
    <interactant intactId="EBI-349105">
        <id>P63167</id>
        <label>DYNLL1</label>
    </interactant>
    <organismsDiffer>false</organismsDiffer>
    <experiments>5</experiments>
</comment>
<comment type="interaction">
    <interactant intactId="EBI-18096911">
        <id>Q8N1W2</id>
    </interactant>
    <interactant intactId="EBI-1389308">
        <id>Q7Z3K3</id>
        <label>POGZ</label>
    </interactant>
    <organismsDiffer>false</organismsDiffer>
    <experiments>3</experiments>
</comment>
<comment type="interaction">
    <interactant intactId="EBI-18096911">
        <id>Q8N1W2</id>
    </interactant>
    <interactant intactId="EBI-3921347">
        <id>P51687</id>
        <label>SUOX</label>
    </interactant>
    <organismsDiffer>false</organismsDiffer>
    <experiments>3</experiments>
</comment>
<comment type="subcellular location">
    <subcellularLocation>
        <location evidence="3">Nucleus</location>
    </subcellularLocation>
</comment>
<comment type="similarity">
    <text evidence="3">Belongs to the krueppel C2H2-type zinc-finger protein family.</text>
</comment>
<proteinExistence type="evidence at protein level"/>
<dbReference type="EMBL" id="AK094712">
    <property type="protein sequence ID" value="BAC04404.1"/>
    <property type="molecule type" value="mRNA"/>
</dbReference>
<dbReference type="EMBL" id="BC126476">
    <property type="protein sequence ID" value="AAI26477.1"/>
    <property type="molecule type" value="mRNA"/>
</dbReference>
<dbReference type="EMBL" id="BC130541">
    <property type="protein sequence ID" value="AAI30542.1"/>
    <property type="molecule type" value="mRNA"/>
</dbReference>
<dbReference type="EMBL" id="AK160373">
    <property type="protein sequence ID" value="BAD18716.1"/>
    <property type="molecule type" value="mRNA"/>
</dbReference>
<dbReference type="EMBL" id="AL831826">
    <property type="protein sequence ID" value="CAD38540.1"/>
    <property type="molecule type" value="mRNA"/>
</dbReference>
<dbReference type="CCDS" id="CCDS10358.1"/>
<dbReference type="RefSeq" id="NP_940928.2">
    <property type="nucleotide sequence ID" value="NM_198526.4"/>
</dbReference>
<dbReference type="RefSeq" id="XP_047288443.1">
    <property type="nucleotide sequence ID" value="XM_047432487.1"/>
</dbReference>
<dbReference type="RefSeq" id="XP_047288444.1">
    <property type="nucleotide sequence ID" value="XM_047432488.1"/>
</dbReference>
<dbReference type="RefSeq" id="XP_054233864.1">
    <property type="nucleotide sequence ID" value="XM_054377889.1"/>
</dbReference>
<dbReference type="RefSeq" id="XP_054233865.1">
    <property type="nucleotide sequence ID" value="XM_054377890.1"/>
</dbReference>
<dbReference type="SMR" id="Q8N1W2"/>
<dbReference type="BioGRID" id="131913">
    <property type="interactions" value="3"/>
</dbReference>
<dbReference type="FunCoup" id="Q8N1W2">
    <property type="interactions" value="60"/>
</dbReference>
<dbReference type="IntAct" id="Q8N1W2">
    <property type="interactions" value="4"/>
</dbReference>
<dbReference type="STRING" id="9606.ENSP00000268154"/>
<dbReference type="iPTMnet" id="Q8N1W2"/>
<dbReference type="PhosphoSitePlus" id="Q8N1W2"/>
<dbReference type="BioMuta" id="ZNF710"/>
<dbReference type="DMDM" id="94730692"/>
<dbReference type="jPOST" id="Q8N1W2"/>
<dbReference type="MassIVE" id="Q8N1W2"/>
<dbReference type="PaxDb" id="9606-ENSP00000268154"/>
<dbReference type="PeptideAtlas" id="Q8N1W2"/>
<dbReference type="ProteomicsDB" id="71643"/>
<dbReference type="Antibodypedia" id="28692">
    <property type="antibodies" value="41 antibodies from 13 providers"/>
</dbReference>
<dbReference type="DNASU" id="374655"/>
<dbReference type="Ensembl" id="ENST00000268154.9">
    <property type="protein sequence ID" value="ENSP00000268154.3"/>
    <property type="gene ID" value="ENSG00000140548.10"/>
</dbReference>
<dbReference type="GeneID" id="374655"/>
<dbReference type="KEGG" id="hsa:374655"/>
<dbReference type="MANE-Select" id="ENST00000268154.9">
    <property type="protein sequence ID" value="ENSP00000268154.3"/>
    <property type="RefSeq nucleotide sequence ID" value="NM_198526.4"/>
    <property type="RefSeq protein sequence ID" value="NP_940928.2"/>
</dbReference>
<dbReference type="UCSC" id="uc002bov.3">
    <property type="organism name" value="human"/>
</dbReference>
<dbReference type="AGR" id="HGNC:25352"/>
<dbReference type="CTD" id="374655"/>
<dbReference type="DisGeNET" id="374655"/>
<dbReference type="GeneCards" id="ZNF710"/>
<dbReference type="HGNC" id="HGNC:25352">
    <property type="gene designation" value="ZNF710"/>
</dbReference>
<dbReference type="HPA" id="ENSG00000140548">
    <property type="expression patterns" value="Tissue enhanced (pancreas)"/>
</dbReference>
<dbReference type="neXtProt" id="NX_Q8N1W2"/>
<dbReference type="OpenTargets" id="ENSG00000140548"/>
<dbReference type="PharmGKB" id="PA142670470"/>
<dbReference type="VEuPathDB" id="HostDB:ENSG00000140548"/>
<dbReference type="eggNOG" id="KOG1721">
    <property type="taxonomic scope" value="Eukaryota"/>
</dbReference>
<dbReference type="GeneTree" id="ENSGT00940000161170"/>
<dbReference type="HOGENOM" id="CLU_002678_54_1_1"/>
<dbReference type="InParanoid" id="Q8N1W2"/>
<dbReference type="OMA" id="KEMAYYS"/>
<dbReference type="OrthoDB" id="7295497at2759"/>
<dbReference type="PAN-GO" id="Q8N1W2">
    <property type="GO annotations" value="3 GO annotations based on evolutionary models"/>
</dbReference>
<dbReference type="PhylomeDB" id="Q8N1W2"/>
<dbReference type="TreeFam" id="TF331510"/>
<dbReference type="PathwayCommons" id="Q8N1W2"/>
<dbReference type="Reactome" id="R-HSA-212436">
    <property type="pathway name" value="Generic Transcription Pathway"/>
</dbReference>
<dbReference type="SignaLink" id="Q8N1W2"/>
<dbReference type="BioGRID-ORCS" id="374655">
    <property type="hits" value="13 hits in 1181 CRISPR screens"/>
</dbReference>
<dbReference type="ChiTaRS" id="ZNF710">
    <property type="organism name" value="human"/>
</dbReference>
<dbReference type="GenomeRNAi" id="374655"/>
<dbReference type="Pharos" id="Q8N1W2">
    <property type="development level" value="Tdark"/>
</dbReference>
<dbReference type="PRO" id="PR:Q8N1W2"/>
<dbReference type="Proteomes" id="UP000005640">
    <property type="component" value="Chromosome 15"/>
</dbReference>
<dbReference type="RNAct" id="Q8N1W2">
    <property type="molecule type" value="protein"/>
</dbReference>
<dbReference type="Bgee" id="ENSG00000140548">
    <property type="expression patterns" value="Expressed in cervix squamous epithelium and 201 other cell types or tissues"/>
</dbReference>
<dbReference type="ExpressionAtlas" id="Q8N1W2">
    <property type="expression patterns" value="baseline and differential"/>
</dbReference>
<dbReference type="GO" id="GO:0005634">
    <property type="term" value="C:nucleus"/>
    <property type="evidence" value="ECO:0007669"/>
    <property type="project" value="UniProtKB-SubCell"/>
</dbReference>
<dbReference type="GO" id="GO:0003700">
    <property type="term" value="F:DNA-binding transcription factor activity"/>
    <property type="evidence" value="ECO:0000318"/>
    <property type="project" value="GO_Central"/>
</dbReference>
<dbReference type="GO" id="GO:0000978">
    <property type="term" value="F:RNA polymerase II cis-regulatory region sequence-specific DNA binding"/>
    <property type="evidence" value="ECO:0000318"/>
    <property type="project" value="GO_Central"/>
</dbReference>
<dbReference type="GO" id="GO:0008270">
    <property type="term" value="F:zinc ion binding"/>
    <property type="evidence" value="ECO:0007669"/>
    <property type="project" value="UniProtKB-KW"/>
</dbReference>
<dbReference type="GO" id="GO:0006357">
    <property type="term" value="P:regulation of transcription by RNA polymerase II"/>
    <property type="evidence" value="ECO:0000318"/>
    <property type="project" value="GO_Central"/>
</dbReference>
<dbReference type="FunFam" id="3.30.160.60:FF:000161">
    <property type="entry name" value="Zinc finger protein 366"/>
    <property type="match status" value="1"/>
</dbReference>
<dbReference type="FunFam" id="3.30.160.60:FF:000186">
    <property type="entry name" value="Zinc finger protein 366"/>
    <property type="match status" value="1"/>
</dbReference>
<dbReference type="FunFam" id="3.30.160.60:FF:000203">
    <property type="entry name" value="Zinc finger protein 366"/>
    <property type="match status" value="1"/>
</dbReference>
<dbReference type="FunFam" id="3.30.160.60:FF:001180">
    <property type="entry name" value="Zinc finger protein 366"/>
    <property type="match status" value="1"/>
</dbReference>
<dbReference type="FunFam" id="3.30.160.60:FF:000182">
    <property type="entry name" value="zinc finger protein 366"/>
    <property type="match status" value="1"/>
</dbReference>
<dbReference type="FunFam" id="3.30.160.60:FF:000191">
    <property type="entry name" value="zinc finger protein 366"/>
    <property type="match status" value="1"/>
</dbReference>
<dbReference type="FunFam" id="3.30.160.60:FF:000451">
    <property type="entry name" value="Zinc finger protein 710"/>
    <property type="match status" value="1"/>
</dbReference>
<dbReference type="FunFam" id="3.30.160.60:FF:000502">
    <property type="entry name" value="Zinc finger protein 710"/>
    <property type="match status" value="1"/>
</dbReference>
<dbReference type="FunFam" id="3.30.160.60:FF:000649">
    <property type="entry name" value="Zinc finger protein 710"/>
    <property type="match status" value="1"/>
</dbReference>
<dbReference type="FunFam" id="3.30.160.60:FF:000684">
    <property type="entry name" value="Zinc finger protein 710"/>
    <property type="match status" value="1"/>
</dbReference>
<dbReference type="Gene3D" id="3.30.160.60">
    <property type="entry name" value="Classic Zinc Finger"/>
    <property type="match status" value="10"/>
</dbReference>
<dbReference type="InterPro" id="IPR036236">
    <property type="entry name" value="Znf_C2H2_sf"/>
</dbReference>
<dbReference type="InterPro" id="IPR013087">
    <property type="entry name" value="Znf_C2H2_type"/>
</dbReference>
<dbReference type="InterPro" id="IPR050457">
    <property type="entry name" value="ZnFinger_BTB_dom_contain"/>
</dbReference>
<dbReference type="PANTHER" id="PTHR46105">
    <property type="entry name" value="AGAP004733-PA"/>
    <property type="match status" value="1"/>
</dbReference>
<dbReference type="PANTHER" id="PTHR46105:SF5">
    <property type="entry name" value="ZINC FINGER AND BTB DOMAIN-CONTAINING PROTEIN 44 ISOFORM X1"/>
    <property type="match status" value="1"/>
</dbReference>
<dbReference type="Pfam" id="PF00096">
    <property type="entry name" value="zf-C2H2"/>
    <property type="match status" value="10"/>
</dbReference>
<dbReference type="Pfam" id="PF13912">
    <property type="entry name" value="zf-C2H2_6"/>
    <property type="match status" value="1"/>
</dbReference>
<dbReference type="SMART" id="SM00355">
    <property type="entry name" value="ZnF_C2H2"/>
    <property type="match status" value="11"/>
</dbReference>
<dbReference type="SUPFAM" id="SSF57667">
    <property type="entry name" value="beta-beta-alpha zinc fingers"/>
    <property type="match status" value="6"/>
</dbReference>
<dbReference type="PROSITE" id="PS00028">
    <property type="entry name" value="ZINC_FINGER_C2H2_1"/>
    <property type="match status" value="11"/>
</dbReference>
<dbReference type="PROSITE" id="PS50157">
    <property type="entry name" value="ZINC_FINGER_C2H2_2"/>
    <property type="match status" value="11"/>
</dbReference>
<name>ZN710_HUMAN</name>
<evidence type="ECO:0000255" key="1">
    <source>
        <dbReference type="PROSITE-ProRule" id="PRU00042"/>
    </source>
</evidence>
<evidence type="ECO:0000256" key="2">
    <source>
        <dbReference type="SAM" id="MobiDB-lite"/>
    </source>
</evidence>
<evidence type="ECO:0000305" key="3"/>
<evidence type="ECO:0007744" key="4">
    <source>
    </source>
</evidence>
<accession>Q8N1W2</accession>
<accession>A0AVS3</accession>
<accession>Q6ZMK9</accession>
<accession>Q8NDU0</accession>
<reference key="1">
    <citation type="journal article" date="2004" name="Nat. Genet.">
        <title>Complete sequencing and characterization of 21,243 full-length human cDNAs.</title>
        <authorList>
            <person name="Ota T."/>
            <person name="Suzuki Y."/>
            <person name="Nishikawa T."/>
            <person name="Otsuki T."/>
            <person name="Sugiyama T."/>
            <person name="Irie R."/>
            <person name="Wakamatsu A."/>
            <person name="Hayashi K."/>
            <person name="Sato H."/>
            <person name="Nagai K."/>
            <person name="Kimura K."/>
            <person name="Makita H."/>
            <person name="Sekine M."/>
            <person name="Obayashi M."/>
            <person name="Nishi T."/>
            <person name="Shibahara T."/>
            <person name="Tanaka T."/>
            <person name="Ishii S."/>
            <person name="Yamamoto J."/>
            <person name="Saito K."/>
            <person name="Kawai Y."/>
            <person name="Isono Y."/>
            <person name="Nakamura Y."/>
            <person name="Nagahari K."/>
            <person name="Murakami K."/>
            <person name="Yasuda T."/>
            <person name="Iwayanagi T."/>
            <person name="Wagatsuma M."/>
            <person name="Shiratori A."/>
            <person name="Sudo H."/>
            <person name="Hosoiri T."/>
            <person name="Kaku Y."/>
            <person name="Kodaira H."/>
            <person name="Kondo H."/>
            <person name="Sugawara M."/>
            <person name="Takahashi M."/>
            <person name="Kanda K."/>
            <person name="Yokoi T."/>
            <person name="Furuya T."/>
            <person name="Kikkawa E."/>
            <person name="Omura Y."/>
            <person name="Abe K."/>
            <person name="Kamihara K."/>
            <person name="Katsuta N."/>
            <person name="Sato K."/>
            <person name="Tanikawa M."/>
            <person name="Yamazaki M."/>
            <person name="Ninomiya K."/>
            <person name="Ishibashi T."/>
            <person name="Yamashita H."/>
            <person name="Murakawa K."/>
            <person name="Fujimori K."/>
            <person name="Tanai H."/>
            <person name="Kimata M."/>
            <person name="Watanabe M."/>
            <person name="Hiraoka S."/>
            <person name="Chiba Y."/>
            <person name="Ishida S."/>
            <person name="Ono Y."/>
            <person name="Takiguchi S."/>
            <person name="Watanabe S."/>
            <person name="Yosida M."/>
            <person name="Hotuta T."/>
            <person name="Kusano J."/>
            <person name="Kanehori K."/>
            <person name="Takahashi-Fujii A."/>
            <person name="Hara H."/>
            <person name="Tanase T.-O."/>
            <person name="Nomura Y."/>
            <person name="Togiya S."/>
            <person name="Komai F."/>
            <person name="Hara R."/>
            <person name="Takeuchi K."/>
            <person name="Arita M."/>
            <person name="Imose N."/>
            <person name="Musashino K."/>
            <person name="Yuuki H."/>
            <person name="Oshima A."/>
            <person name="Sasaki N."/>
            <person name="Aotsuka S."/>
            <person name="Yoshikawa Y."/>
            <person name="Matsunawa H."/>
            <person name="Ichihara T."/>
            <person name="Shiohata N."/>
            <person name="Sano S."/>
            <person name="Moriya S."/>
            <person name="Momiyama H."/>
            <person name="Satoh N."/>
            <person name="Takami S."/>
            <person name="Terashima Y."/>
            <person name="Suzuki O."/>
            <person name="Nakagawa S."/>
            <person name="Senoh A."/>
            <person name="Mizoguchi H."/>
            <person name="Goto Y."/>
            <person name="Shimizu F."/>
            <person name="Wakebe H."/>
            <person name="Hishigaki H."/>
            <person name="Watanabe T."/>
            <person name="Sugiyama A."/>
            <person name="Takemoto M."/>
            <person name="Kawakami B."/>
            <person name="Yamazaki M."/>
            <person name="Watanabe K."/>
            <person name="Kumagai A."/>
            <person name="Itakura S."/>
            <person name="Fukuzumi Y."/>
            <person name="Fujimori Y."/>
            <person name="Komiyama M."/>
            <person name="Tashiro H."/>
            <person name="Tanigami A."/>
            <person name="Fujiwara T."/>
            <person name="Ono T."/>
            <person name="Yamada K."/>
            <person name="Fujii Y."/>
            <person name="Ozaki K."/>
            <person name="Hirao M."/>
            <person name="Ohmori Y."/>
            <person name="Kawabata A."/>
            <person name="Hikiji T."/>
            <person name="Kobatake N."/>
            <person name="Inagaki H."/>
            <person name="Ikema Y."/>
            <person name="Okamoto S."/>
            <person name="Okitani R."/>
            <person name="Kawakami T."/>
            <person name="Noguchi S."/>
            <person name="Itoh T."/>
            <person name="Shigeta K."/>
            <person name="Senba T."/>
            <person name="Matsumura K."/>
            <person name="Nakajima Y."/>
            <person name="Mizuno T."/>
            <person name="Morinaga M."/>
            <person name="Sasaki M."/>
            <person name="Togashi T."/>
            <person name="Oyama M."/>
            <person name="Hata H."/>
            <person name="Watanabe M."/>
            <person name="Komatsu T."/>
            <person name="Mizushima-Sugano J."/>
            <person name="Satoh T."/>
            <person name="Shirai Y."/>
            <person name="Takahashi Y."/>
            <person name="Nakagawa K."/>
            <person name="Okumura K."/>
            <person name="Nagase T."/>
            <person name="Nomura N."/>
            <person name="Kikuchi H."/>
            <person name="Masuho Y."/>
            <person name="Yamashita R."/>
            <person name="Nakai K."/>
            <person name="Yada T."/>
            <person name="Nakamura Y."/>
            <person name="Ohara O."/>
            <person name="Isogai T."/>
            <person name="Sugano S."/>
        </authorList>
    </citation>
    <scope>NUCLEOTIDE SEQUENCE [LARGE SCALE MRNA]</scope>
    <source>
        <tissue>Amygdala</tissue>
    </source>
</reference>
<reference key="2">
    <citation type="journal article" date="2004" name="Genome Res.">
        <title>The status, quality, and expansion of the NIH full-length cDNA project: the Mammalian Gene Collection (MGC).</title>
        <authorList>
            <consortium name="The MGC Project Team"/>
        </authorList>
    </citation>
    <scope>NUCLEOTIDE SEQUENCE [LARGE SCALE MRNA]</scope>
</reference>
<reference key="3">
    <citation type="submission" date="2004-04" db="EMBL/GenBank/DDBJ databases">
        <title>The nucleotide sequence of a long cDNA clone isolated from human spleen.</title>
        <authorList>
            <person name="Jikuya H."/>
            <person name="Takano J."/>
            <person name="Nomura N."/>
            <person name="Kikuno R."/>
            <person name="Nagase T."/>
            <person name="Ohara O."/>
        </authorList>
    </citation>
    <scope>NUCLEOTIDE SEQUENCE [LARGE SCALE MRNA] OF 387-664</scope>
    <source>
        <tissue>Spleen</tissue>
    </source>
</reference>
<reference key="4">
    <citation type="journal article" date="2007" name="BMC Genomics">
        <title>The full-ORF clone resource of the German cDNA consortium.</title>
        <authorList>
            <person name="Bechtel S."/>
            <person name="Rosenfelder H."/>
            <person name="Duda A."/>
            <person name="Schmidt C.P."/>
            <person name="Ernst U."/>
            <person name="Wellenreuther R."/>
            <person name="Mehrle A."/>
            <person name="Schuster C."/>
            <person name="Bahr A."/>
            <person name="Bloecker H."/>
            <person name="Heubner D."/>
            <person name="Hoerlein A."/>
            <person name="Michel G."/>
            <person name="Wedler H."/>
            <person name="Koehrer K."/>
            <person name="Ottenwaelder B."/>
            <person name="Poustka A."/>
            <person name="Wiemann S."/>
            <person name="Schupp I."/>
        </authorList>
    </citation>
    <scope>NUCLEOTIDE SEQUENCE [LARGE SCALE MRNA] OF 460-664</scope>
    <source>
        <tissue>Brain</tissue>
    </source>
</reference>
<reference key="5">
    <citation type="journal article" date="2017" name="Nat. Struct. Mol. Biol.">
        <title>Site-specific mapping of the human SUMO proteome reveals co-modification with phosphorylation.</title>
        <authorList>
            <person name="Hendriks I.A."/>
            <person name="Lyon D."/>
            <person name="Young C."/>
            <person name="Jensen L.J."/>
            <person name="Vertegaal A.C."/>
            <person name="Nielsen M.L."/>
        </authorList>
    </citation>
    <scope>SUMOYLATION [LARGE SCALE ANALYSIS] AT LYS-110; LYS-113 AND LYS-377</scope>
    <scope>IDENTIFICATION BY MASS SPECTROMETRY [LARGE SCALE ANALYSIS]</scope>
</reference>
<gene>
    <name type="primary">ZNF710</name>
</gene>
<feature type="chain" id="PRO_0000233708" description="Zinc finger protein 710">
    <location>
        <begin position="1"/>
        <end position="664"/>
    </location>
</feature>
<feature type="zinc finger region" description="C2H2-type 1" evidence="1">
    <location>
        <begin position="295"/>
        <end position="317"/>
    </location>
</feature>
<feature type="zinc finger region" description="C2H2-type 2" evidence="1">
    <location>
        <begin position="323"/>
        <end position="345"/>
    </location>
</feature>
<feature type="zinc finger region" description="C2H2-type 3" evidence="1">
    <location>
        <begin position="351"/>
        <end position="373"/>
    </location>
</feature>
<feature type="zinc finger region" description="C2H2-type 4" evidence="1">
    <location>
        <begin position="379"/>
        <end position="401"/>
    </location>
</feature>
<feature type="zinc finger region" description="C2H2-type 5" evidence="1">
    <location>
        <begin position="407"/>
        <end position="429"/>
    </location>
</feature>
<feature type="zinc finger region" description="C2H2-type 6" evidence="1">
    <location>
        <begin position="435"/>
        <end position="457"/>
    </location>
</feature>
<feature type="zinc finger region" description="C2H2-type 7" evidence="1">
    <location>
        <begin position="463"/>
        <end position="485"/>
    </location>
</feature>
<feature type="zinc finger region" description="C2H2-type 8" evidence="1">
    <location>
        <begin position="491"/>
        <end position="513"/>
    </location>
</feature>
<feature type="zinc finger region" description="C2H2-type 9" evidence="1">
    <location>
        <begin position="519"/>
        <end position="541"/>
    </location>
</feature>
<feature type="zinc finger region" description="C2H2-type 10" evidence="1">
    <location>
        <begin position="547"/>
        <end position="569"/>
    </location>
</feature>
<feature type="zinc finger region" description="C2H2-type 11" evidence="1">
    <location>
        <begin position="575"/>
        <end position="598"/>
    </location>
</feature>
<feature type="region of interest" description="Disordered" evidence="2">
    <location>
        <begin position="121"/>
        <end position="141"/>
    </location>
</feature>
<feature type="cross-link" description="Glycyl lysine isopeptide (Lys-Gly) (interchain with G-Cter in SUMO2)" evidence="4">
    <location>
        <position position="110"/>
    </location>
</feature>
<feature type="cross-link" description="Glycyl lysine isopeptide (Lys-Gly) (interchain with G-Cter in SUMO2)" evidence="4">
    <location>
        <position position="113"/>
    </location>
</feature>
<feature type="cross-link" description="Glycyl lysine isopeptide (Lys-Gly) (interchain with G-Cter in SUMO2)" evidence="4">
    <location>
        <position position="377"/>
    </location>
</feature>
<feature type="sequence conflict" description="In Ref. 1; BAC04404." evidence="3" ref="1">
    <original>M</original>
    <variation>I</variation>
    <location>
        <position position="601"/>
    </location>
</feature>